<name>HIS82_BORBR</name>
<evidence type="ECO:0000250" key="1"/>
<evidence type="ECO:0000305" key="2"/>
<reference key="1">
    <citation type="journal article" date="2003" name="Nat. Genet.">
        <title>Comparative analysis of the genome sequences of Bordetella pertussis, Bordetella parapertussis and Bordetella bronchiseptica.</title>
        <authorList>
            <person name="Parkhill J."/>
            <person name="Sebaihia M."/>
            <person name="Preston A."/>
            <person name="Murphy L.D."/>
            <person name="Thomson N.R."/>
            <person name="Harris D.E."/>
            <person name="Holden M.T.G."/>
            <person name="Churcher C.M."/>
            <person name="Bentley S.D."/>
            <person name="Mungall K.L."/>
            <person name="Cerdeno-Tarraga A.-M."/>
            <person name="Temple L."/>
            <person name="James K.D."/>
            <person name="Harris B."/>
            <person name="Quail M.A."/>
            <person name="Achtman M."/>
            <person name="Atkin R."/>
            <person name="Baker S."/>
            <person name="Basham D."/>
            <person name="Bason N."/>
            <person name="Cherevach I."/>
            <person name="Chillingworth T."/>
            <person name="Collins M."/>
            <person name="Cronin A."/>
            <person name="Davis P."/>
            <person name="Doggett J."/>
            <person name="Feltwell T."/>
            <person name="Goble A."/>
            <person name="Hamlin N."/>
            <person name="Hauser H."/>
            <person name="Holroyd S."/>
            <person name="Jagels K."/>
            <person name="Leather S."/>
            <person name="Moule S."/>
            <person name="Norberczak H."/>
            <person name="O'Neil S."/>
            <person name="Ormond D."/>
            <person name="Price C."/>
            <person name="Rabbinowitsch E."/>
            <person name="Rutter S."/>
            <person name="Sanders M."/>
            <person name="Saunders D."/>
            <person name="Seeger K."/>
            <person name="Sharp S."/>
            <person name="Simmonds M."/>
            <person name="Skelton J."/>
            <person name="Squares R."/>
            <person name="Squares S."/>
            <person name="Stevens K."/>
            <person name="Unwin L."/>
            <person name="Whitehead S."/>
            <person name="Barrell B.G."/>
            <person name="Maskell D.J."/>
        </authorList>
    </citation>
    <scope>NUCLEOTIDE SEQUENCE [LARGE SCALE GENOMIC DNA]</scope>
    <source>
        <strain>ATCC BAA-588 / NCTC 13252 / RB50</strain>
    </source>
</reference>
<gene>
    <name type="primary">hisC2</name>
    <name type="ordered locus">BB4855</name>
</gene>
<comment type="catalytic activity">
    <reaction>
        <text>L-histidinol phosphate + 2-oxoglutarate = 3-(imidazol-4-yl)-2-oxopropyl phosphate + L-glutamate</text>
        <dbReference type="Rhea" id="RHEA:23744"/>
        <dbReference type="ChEBI" id="CHEBI:16810"/>
        <dbReference type="ChEBI" id="CHEBI:29985"/>
        <dbReference type="ChEBI" id="CHEBI:57766"/>
        <dbReference type="ChEBI" id="CHEBI:57980"/>
        <dbReference type="EC" id="2.6.1.9"/>
    </reaction>
</comment>
<comment type="cofactor">
    <cofactor evidence="1">
        <name>pyridoxal 5'-phosphate</name>
        <dbReference type="ChEBI" id="CHEBI:597326"/>
    </cofactor>
</comment>
<comment type="pathway">
    <text>Amino-acid biosynthesis; L-histidine biosynthesis; L-histidine from 5-phospho-alpha-D-ribose 1-diphosphate: step 7/9.</text>
</comment>
<comment type="subunit">
    <text evidence="1">Homodimer.</text>
</comment>
<comment type="similarity">
    <text evidence="2">Belongs to the class-II pyridoxal-phosphate-dependent aminotransferase family. Histidinol-phosphate aminotransferase subfamily.</text>
</comment>
<dbReference type="EC" id="2.6.1.9"/>
<dbReference type="EMBL" id="BX640451">
    <property type="protein sequence ID" value="CAE35218.1"/>
    <property type="molecule type" value="Genomic_DNA"/>
</dbReference>
<dbReference type="SMR" id="Q7WDY3"/>
<dbReference type="KEGG" id="bbr:BB4855"/>
<dbReference type="eggNOG" id="COG0079">
    <property type="taxonomic scope" value="Bacteria"/>
</dbReference>
<dbReference type="HOGENOM" id="CLU_017584_3_1_4"/>
<dbReference type="UniPathway" id="UPA00031">
    <property type="reaction ID" value="UER00012"/>
</dbReference>
<dbReference type="Proteomes" id="UP000001027">
    <property type="component" value="Chromosome"/>
</dbReference>
<dbReference type="GO" id="GO:0004400">
    <property type="term" value="F:histidinol-phosphate transaminase activity"/>
    <property type="evidence" value="ECO:0007669"/>
    <property type="project" value="UniProtKB-UniRule"/>
</dbReference>
<dbReference type="GO" id="GO:0030170">
    <property type="term" value="F:pyridoxal phosphate binding"/>
    <property type="evidence" value="ECO:0007669"/>
    <property type="project" value="InterPro"/>
</dbReference>
<dbReference type="GO" id="GO:0000105">
    <property type="term" value="P:L-histidine biosynthetic process"/>
    <property type="evidence" value="ECO:0007669"/>
    <property type="project" value="UniProtKB-UniRule"/>
</dbReference>
<dbReference type="CDD" id="cd00609">
    <property type="entry name" value="AAT_like"/>
    <property type="match status" value="1"/>
</dbReference>
<dbReference type="Gene3D" id="3.90.1150.10">
    <property type="entry name" value="Aspartate Aminotransferase, domain 1"/>
    <property type="match status" value="1"/>
</dbReference>
<dbReference type="Gene3D" id="3.40.640.10">
    <property type="entry name" value="Type I PLP-dependent aspartate aminotransferase-like (Major domain)"/>
    <property type="match status" value="1"/>
</dbReference>
<dbReference type="HAMAP" id="MF_01023">
    <property type="entry name" value="HisC_aminotrans_2"/>
    <property type="match status" value="1"/>
</dbReference>
<dbReference type="InterPro" id="IPR004839">
    <property type="entry name" value="Aminotransferase_I/II_large"/>
</dbReference>
<dbReference type="InterPro" id="IPR005861">
    <property type="entry name" value="HisP_aminotrans"/>
</dbReference>
<dbReference type="InterPro" id="IPR015424">
    <property type="entry name" value="PyrdxlP-dep_Trfase"/>
</dbReference>
<dbReference type="InterPro" id="IPR015421">
    <property type="entry name" value="PyrdxlP-dep_Trfase_major"/>
</dbReference>
<dbReference type="InterPro" id="IPR015422">
    <property type="entry name" value="PyrdxlP-dep_Trfase_small"/>
</dbReference>
<dbReference type="NCBIfam" id="TIGR01141">
    <property type="entry name" value="hisC"/>
    <property type="match status" value="1"/>
</dbReference>
<dbReference type="PANTHER" id="PTHR42885:SF2">
    <property type="entry name" value="HISTIDINOL-PHOSPHATE AMINOTRANSFERASE"/>
    <property type="match status" value="1"/>
</dbReference>
<dbReference type="PANTHER" id="PTHR42885">
    <property type="entry name" value="HISTIDINOL-PHOSPHATE AMINOTRANSFERASE-RELATED"/>
    <property type="match status" value="1"/>
</dbReference>
<dbReference type="Pfam" id="PF00155">
    <property type="entry name" value="Aminotran_1_2"/>
    <property type="match status" value="1"/>
</dbReference>
<dbReference type="SUPFAM" id="SSF53383">
    <property type="entry name" value="PLP-dependent transferases"/>
    <property type="match status" value="1"/>
</dbReference>
<protein>
    <recommendedName>
        <fullName>Histidinol-phosphate aminotransferase 2</fullName>
        <ecNumber>2.6.1.9</ecNumber>
    </recommendedName>
    <alternativeName>
        <fullName>Imidazole acetol-phosphate transaminase 2</fullName>
    </alternativeName>
</protein>
<feature type="chain" id="PRO_0000153320" description="Histidinol-phosphate aminotransferase 2">
    <location>
        <begin position="1"/>
        <end position="365"/>
    </location>
</feature>
<feature type="modified residue" description="N6-(pyridoxal phosphate)lysine" evidence="1">
    <location>
        <position position="222"/>
    </location>
</feature>
<proteinExistence type="inferred from homology"/>
<organism>
    <name type="scientific">Bordetella bronchiseptica (strain ATCC BAA-588 / NCTC 13252 / RB50)</name>
    <name type="common">Alcaligenes bronchisepticus</name>
    <dbReference type="NCBI Taxonomy" id="257310"/>
    <lineage>
        <taxon>Bacteria</taxon>
        <taxon>Pseudomonadati</taxon>
        <taxon>Pseudomonadota</taxon>
        <taxon>Betaproteobacteria</taxon>
        <taxon>Burkholderiales</taxon>
        <taxon>Alcaligenaceae</taxon>
        <taxon>Bordetella</taxon>
    </lineage>
</organism>
<keyword id="KW-0028">Amino-acid biosynthesis</keyword>
<keyword id="KW-0032">Aminotransferase</keyword>
<keyword id="KW-0368">Histidine biosynthesis</keyword>
<keyword id="KW-0663">Pyridoxal phosphate</keyword>
<keyword id="KW-0808">Transferase</keyword>
<accession>Q7WDY3</accession>
<sequence length="365" mass="38985">MTGVAAPERIARAVRADIRALTAYPVADAAGCIKLDAMECPYELPAEVRDDIARAARETPLNRYPAAANPALQAQVRQAFEVPAQAGLLFGNGSDELIHLIIQACCEPGDTVLSPWPSFVYFDMAARLSHARFVGVPLTAGLELDLPATLAAIEAHQPKVVFLALPNNPTGGLWPDAAVRAILDAAPGLVVLDEAYQPFAGHTWMPRIMDEPNAVVMRTVSKIGLAGLRFGYLAGHPAWIAEFDKVRPPYNMDVLSQAVLAAVLRHKPVLDAQADRLRADRQPLADGLAALPGVTVFPSAGNFVLARFCGKLDGNAVHLALKTRKILVRNFSNAHPLLADCLRISVGTPTENAAVLSALQDILSA</sequence>